<gene>
    <name type="primary">Cyp2a5</name>
    <name type="synonym">Cyp2a-5</name>
</gene>
<comment type="function">
    <text>Exhibits a high coumarin 7-hydroxylase activity.</text>
</comment>
<comment type="catalytic activity">
    <reaction>
        <text>an organic molecule + reduced [NADPH--hemoprotein reductase] + O2 = an alcohol + oxidized [NADPH--hemoprotein reductase] + H2O + H(+)</text>
        <dbReference type="Rhea" id="RHEA:17149"/>
        <dbReference type="Rhea" id="RHEA-COMP:11964"/>
        <dbReference type="Rhea" id="RHEA-COMP:11965"/>
        <dbReference type="ChEBI" id="CHEBI:15377"/>
        <dbReference type="ChEBI" id="CHEBI:15378"/>
        <dbReference type="ChEBI" id="CHEBI:15379"/>
        <dbReference type="ChEBI" id="CHEBI:30879"/>
        <dbReference type="ChEBI" id="CHEBI:57618"/>
        <dbReference type="ChEBI" id="CHEBI:58210"/>
        <dbReference type="ChEBI" id="CHEBI:142491"/>
        <dbReference type="EC" id="1.14.14.1"/>
    </reaction>
</comment>
<comment type="cofactor">
    <cofactor evidence="1">
        <name>heme</name>
        <dbReference type="ChEBI" id="CHEBI:30413"/>
    </cofactor>
</comment>
<comment type="subcellular location">
    <subcellularLocation>
        <location>Endoplasmic reticulum membrane</location>
        <topology>Peripheral membrane protein</topology>
    </subcellularLocation>
    <subcellularLocation>
        <location>Microsome membrane</location>
        <topology>Peripheral membrane protein</topology>
    </subcellularLocation>
</comment>
<comment type="tissue specificity">
    <text evidence="4">Liver, with a strong circadian rhythmicity. Circadian expression is regulated by DBP.</text>
</comment>
<comment type="developmental stage">
    <text>In liver; activity 6 fold higher in females than in males.</text>
</comment>
<comment type="miscellaneous">
    <text>There are only 11 differences between the sequence of testosterone 15-alpha-hydroxylase and that of coumarin 7-hydroxylase. By site-directed mutagenesis it has been shown that modification of position 209 is sufficient to convert the specificity of the two forms of the enzyme.</text>
</comment>
<comment type="similarity">
    <text evidence="5">Belongs to the cytochrome P450 family.</text>
</comment>
<keyword id="KW-0007">Acetylation</keyword>
<keyword id="KW-0256">Endoplasmic reticulum</keyword>
<keyword id="KW-0349">Heme</keyword>
<keyword id="KW-0408">Iron</keyword>
<keyword id="KW-0472">Membrane</keyword>
<keyword id="KW-0479">Metal-binding</keyword>
<keyword id="KW-0492">Microsome</keyword>
<keyword id="KW-0503">Monooxygenase</keyword>
<keyword id="KW-0560">Oxidoreductase</keyword>
<keyword id="KW-0597">Phosphoprotein</keyword>
<keyword id="KW-1185">Reference proteome</keyword>
<proteinExistence type="evidence at transcript level"/>
<organism>
    <name type="scientific">Mus musculus</name>
    <name type="common">Mouse</name>
    <dbReference type="NCBI Taxonomy" id="10090"/>
    <lineage>
        <taxon>Eukaryota</taxon>
        <taxon>Metazoa</taxon>
        <taxon>Chordata</taxon>
        <taxon>Craniata</taxon>
        <taxon>Vertebrata</taxon>
        <taxon>Euteleostomi</taxon>
        <taxon>Mammalia</taxon>
        <taxon>Eutheria</taxon>
        <taxon>Euarchontoglires</taxon>
        <taxon>Glires</taxon>
        <taxon>Rodentia</taxon>
        <taxon>Myomorpha</taxon>
        <taxon>Muroidea</taxon>
        <taxon>Muridae</taxon>
        <taxon>Murinae</taxon>
        <taxon>Mus</taxon>
        <taxon>Mus</taxon>
    </lineage>
</organism>
<feature type="chain" id="PRO_0000051667" description="Cytochrome P450 2A5">
    <location>
        <begin position="1"/>
        <end position="494"/>
    </location>
</feature>
<feature type="binding site" description="axial binding residue">
    <location>
        <position position="439"/>
    </location>
    <ligand>
        <name>heme</name>
        <dbReference type="ChEBI" id="CHEBI:30413"/>
    </ligand>
    <ligandPart>
        <name>Fe</name>
        <dbReference type="ChEBI" id="CHEBI:18248"/>
    </ligandPart>
</feature>
<feature type="modified residue" description="Phosphoserine" evidence="2">
    <location>
        <position position="131"/>
    </location>
</feature>
<feature type="modified residue" description="N6-acetyllysine" evidence="3">
    <location>
        <position position="379"/>
    </location>
</feature>
<dbReference type="EC" id="1.14.14.1"/>
<dbReference type="EMBL" id="M25211">
    <property type="protein sequence ID" value="AAA37798.1"/>
    <property type="molecule type" value="Genomic_DNA"/>
</dbReference>
<dbReference type="EMBL" id="M26204">
    <property type="protein sequence ID" value="AAA37798.1"/>
    <property type="status" value="JOINED"/>
    <property type="molecule type" value="Genomic_DNA"/>
</dbReference>
<dbReference type="EMBL" id="M25205">
    <property type="protein sequence ID" value="AAA37798.1"/>
    <property type="status" value="JOINED"/>
    <property type="molecule type" value="Genomic_DNA"/>
</dbReference>
<dbReference type="EMBL" id="M25206">
    <property type="protein sequence ID" value="AAA37798.1"/>
    <property type="status" value="JOINED"/>
    <property type="molecule type" value="Genomic_DNA"/>
</dbReference>
<dbReference type="EMBL" id="M25207">
    <property type="protein sequence ID" value="AAA37798.1"/>
    <property type="status" value="JOINED"/>
    <property type="molecule type" value="Genomic_DNA"/>
</dbReference>
<dbReference type="EMBL" id="M25208">
    <property type="protein sequence ID" value="AAA37798.1"/>
    <property type="status" value="JOINED"/>
    <property type="molecule type" value="Genomic_DNA"/>
</dbReference>
<dbReference type="EMBL" id="M25209">
    <property type="protein sequence ID" value="AAA37798.1"/>
    <property type="status" value="JOINED"/>
    <property type="molecule type" value="Genomic_DNA"/>
</dbReference>
<dbReference type="EMBL" id="M25210">
    <property type="protein sequence ID" value="AAA37798.1"/>
    <property type="status" value="JOINED"/>
    <property type="molecule type" value="Genomic_DNA"/>
</dbReference>
<dbReference type="EMBL" id="X89864">
    <property type="protein sequence ID" value="CAA61963.1"/>
    <property type="molecule type" value="mRNA"/>
</dbReference>
<dbReference type="CCDS" id="CCDS21008.1"/>
<dbReference type="PIR" id="B33531">
    <property type="entry name" value="B33531"/>
</dbReference>
<dbReference type="SMR" id="P20852"/>
<dbReference type="FunCoup" id="P20852">
    <property type="interactions" value="718"/>
</dbReference>
<dbReference type="STRING" id="10090.ENSMUSP00000005685"/>
<dbReference type="BindingDB" id="P20852"/>
<dbReference type="ChEMBL" id="CHEMBL4085"/>
<dbReference type="GlyGen" id="P20852">
    <property type="glycosylation" value="2 sites, 1 O-linked glycan (1 site)"/>
</dbReference>
<dbReference type="iPTMnet" id="P20852"/>
<dbReference type="PhosphoSitePlus" id="P20852"/>
<dbReference type="SwissPalm" id="P20852"/>
<dbReference type="jPOST" id="P20852"/>
<dbReference type="PaxDb" id="10090-ENSMUSP00000005685"/>
<dbReference type="PeptideAtlas" id="P20852"/>
<dbReference type="ProteomicsDB" id="285276"/>
<dbReference type="AGR" id="MGI:88597"/>
<dbReference type="MGI" id="MGI:88597">
    <property type="gene designation" value="Cyp2a5"/>
</dbReference>
<dbReference type="eggNOG" id="KOG0156">
    <property type="taxonomic scope" value="Eukaryota"/>
</dbReference>
<dbReference type="InParanoid" id="P20852"/>
<dbReference type="PhylomeDB" id="P20852"/>
<dbReference type="Reactome" id="R-MMU-211935">
    <property type="pathway name" value="Fatty acids"/>
</dbReference>
<dbReference type="Reactome" id="R-MMU-211981">
    <property type="pathway name" value="Xenobiotics"/>
</dbReference>
<dbReference type="Reactome" id="R-MMU-211999">
    <property type="pathway name" value="CYP2E1 reactions"/>
</dbReference>
<dbReference type="Reactome" id="R-MMU-5423646">
    <property type="pathway name" value="Aflatoxin activation and detoxification"/>
</dbReference>
<dbReference type="SABIO-RK" id="P20852"/>
<dbReference type="PRO" id="PR:P20852"/>
<dbReference type="Proteomes" id="UP000000589">
    <property type="component" value="Unplaced"/>
</dbReference>
<dbReference type="RNAct" id="P20852">
    <property type="molecule type" value="protein"/>
</dbReference>
<dbReference type="GO" id="GO:0005789">
    <property type="term" value="C:endoplasmic reticulum membrane"/>
    <property type="evidence" value="ECO:0007669"/>
    <property type="project" value="UniProtKB-SubCell"/>
</dbReference>
<dbReference type="GO" id="GO:0020037">
    <property type="term" value="F:heme binding"/>
    <property type="evidence" value="ECO:0007669"/>
    <property type="project" value="InterPro"/>
</dbReference>
<dbReference type="GO" id="GO:0005506">
    <property type="term" value="F:iron ion binding"/>
    <property type="evidence" value="ECO:0007669"/>
    <property type="project" value="InterPro"/>
</dbReference>
<dbReference type="GO" id="GO:0016712">
    <property type="term" value="F:oxidoreductase activity, acting on paired donors, with incorporation or reduction of molecular oxygen, reduced flavin or flavoprotein as one donor, and incorporation of one atom of oxygen"/>
    <property type="evidence" value="ECO:0007669"/>
    <property type="project" value="UniProtKB-EC"/>
</dbReference>
<dbReference type="GO" id="GO:0071276">
    <property type="term" value="P:cellular response to cadmium ion"/>
    <property type="evidence" value="ECO:0000314"/>
    <property type="project" value="MGI"/>
</dbReference>
<dbReference type="GO" id="GO:0042168">
    <property type="term" value="P:heme metabolic process"/>
    <property type="evidence" value="ECO:0000314"/>
    <property type="project" value="MGI"/>
</dbReference>
<dbReference type="GO" id="GO:0035634">
    <property type="term" value="P:response to stilbenoid"/>
    <property type="evidence" value="ECO:0000270"/>
    <property type="project" value="UniProtKB"/>
</dbReference>
<dbReference type="CDD" id="cd20668">
    <property type="entry name" value="CYP2A"/>
    <property type="match status" value="1"/>
</dbReference>
<dbReference type="FunFam" id="1.10.630.10:FF:000238">
    <property type="entry name" value="Cytochrome P450 2A6"/>
    <property type="match status" value="1"/>
</dbReference>
<dbReference type="Gene3D" id="1.10.630.10">
    <property type="entry name" value="Cytochrome P450"/>
    <property type="match status" value="1"/>
</dbReference>
<dbReference type="InterPro" id="IPR001128">
    <property type="entry name" value="Cyt_P450"/>
</dbReference>
<dbReference type="InterPro" id="IPR017972">
    <property type="entry name" value="Cyt_P450_CS"/>
</dbReference>
<dbReference type="InterPro" id="IPR002401">
    <property type="entry name" value="Cyt_P450_E_grp-I"/>
</dbReference>
<dbReference type="InterPro" id="IPR008067">
    <property type="entry name" value="Cyt_P450_E_grp-I_CYP2A-like"/>
</dbReference>
<dbReference type="InterPro" id="IPR036396">
    <property type="entry name" value="Cyt_P450_sf"/>
</dbReference>
<dbReference type="InterPro" id="IPR050182">
    <property type="entry name" value="Cytochrome_P450_fam2"/>
</dbReference>
<dbReference type="PANTHER" id="PTHR24300:SF180">
    <property type="entry name" value="CYTOCHROME P450 2A6"/>
    <property type="match status" value="1"/>
</dbReference>
<dbReference type="PANTHER" id="PTHR24300">
    <property type="entry name" value="CYTOCHROME P450 508A4-RELATED"/>
    <property type="match status" value="1"/>
</dbReference>
<dbReference type="Pfam" id="PF00067">
    <property type="entry name" value="p450"/>
    <property type="match status" value="1"/>
</dbReference>
<dbReference type="PRINTS" id="PR00463">
    <property type="entry name" value="EP450I"/>
</dbReference>
<dbReference type="PRINTS" id="PR01684">
    <property type="entry name" value="EP450ICYP2A"/>
</dbReference>
<dbReference type="PRINTS" id="PR00385">
    <property type="entry name" value="P450"/>
</dbReference>
<dbReference type="SUPFAM" id="SSF48264">
    <property type="entry name" value="Cytochrome P450"/>
    <property type="match status" value="1"/>
</dbReference>
<dbReference type="PROSITE" id="PS00086">
    <property type="entry name" value="CYTOCHROME_P450"/>
    <property type="match status" value="1"/>
</dbReference>
<sequence>MLTSGLLLVAAVAFLSVLVLMSVWKQRKLSGKLPPGPTPLPFIGNFLQLNTEQMYNSLMKISQRYGPVFTIYLGPRRIVVLCGQEAVKEALVDQAEEFSGRGEQATFDWLFKGYGVVFSSGERAKQLRRFSIATLRDFGVGKRGIEERIQEEAGFLIDSFRKTNGAFIDPTFYLSRTVSNVISSIVFGDRFDYEDKEFLSLLRMMLGSFQFTATSMGQLYEMFSSVMKHLPGPQQQAFKELQGLEDFITKKVEHNQRTLDPNSPRDFIDSFLIRMLEEKKNPNTEFYMKNLVLTTLNLFFAGTETVSTTLRYGFLLLMKHPDIEAKVHEEIDRVIGRNRQPKYEDRMKMPYTEAVIHEIQRFADMIPMGLARRVTKDTKFRDFLLPKGTEVFPMLGSVLKDPKFFSNPKDFNPKHFLDDKGQFKKNDAFVPFSIGKRYCFGEGLARMELFLFLTNIMQNFHFKSTQAPQDIDVSPRLVGFATIPPTYTMSFLSR</sequence>
<protein>
    <recommendedName>
        <fullName>Cytochrome P450 2A5</fullName>
        <ecNumber>1.14.14.1</ecNumber>
    </recommendedName>
    <alternativeName>
        <fullName>CYPIIA5</fullName>
    </alternativeName>
    <alternativeName>
        <fullName>Coumarin 7-hydroxylase</fullName>
    </alternativeName>
    <alternativeName>
        <fullName>Cytochrome P450-15-COH</fullName>
    </alternativeName>
    <alternativeName>
        <fullName>Cytochrome P450-IIA3.2</fullName>
    </alternativeName>
</protein>
<reference key="1">
    <citation type="journal article" date="1989" name="J. Biol. Chem.">
        <title>The structure and characterization of type I P-450(15) alpha gene as major steroid 15 alpha-hydroxylase and its comparison with type II P-450(15) alpha gene.</title>
        <authorList>
            <person name="Lindberg R."/>
            <person name="Burkhart B."/>
            <person name="Ichikawa T."/>
            <person name="Negishi M."/>
        </authorList>
    </citation>
    <scope>NUCLEOTIDE SEQUENCE [GENOMIC DNA]</scope>
    <source>
        <tissue>Kidney</tissue>
    </source>
</reference>
<reference key="2">
    <citation type="submission" date="1995-07" db="EMBL/GenBank/DDBJ databases">
        <title>cDNA and amino acid sequence of a new cyp2a isoform overexpressed in chemically induced mouse hepatoma.</title>
        <authorList>
            <person name="Jounaidi Y."/>
        </authorList>
    </citation>
    <scope>NUCLEOTIDE SEQUENCE [MRNA]</scope>
    <source>
        <strain>17NC/Z</strain>
    </source>
</reference>
<reference key="3">
    <citation type="journal article" date="1989" name="Nature">
        <title>Alteration of mouse cytochrome P450coh substrate specificity by mutation of a single amino-acid residue.</title>
        <authorList>
            <person name="Lindberg R."/>
            <person name="Negishi M."/>
        </authorList>
    </citation>
    <scope>MUTAGENESIS</scope>
</reference>
<reference key="4">
    <citation type="journal article" date="1999" name="Mol. Cell. Biol.">
        <title>Circadian expression of the steroid 15 alpha-hydroxylase (Cyp2a4) and coumarin 7-hydroxylase (Cyp2a5) genes in mouse liver is regulated by the PAR leucine zipper transcription factor DBP.</title>
        <authorList>
            <person name="Lavery D.J."/>
            <person name="Lopez-Molina L."/>
            <person name="Margueron R."/>
            <person name="Fleury-Olela F."/>
            <person name="Conquet F."/>
            <person name="Schibler U."/>
            <person name="Bonfils C."/>
        </authorList>
    </citation>
    <scope>TISSUE SPECIFICITY</scope>
</reference>
<evidence type="ECO:0000250" key="1"/>
<evidence type="ECO:0000250" key="2">
    <source>
        <dbReference type="UniProtKB" id="P00176"/>
    </source>
</evidence>
<evidence type="ECO:0000250" key="3">
    <source>
        <dbReference type="UniProtKB" id="Q64458"/>
    </source>
</evidence>
<evidence type="ECO:0000269" key="4">
    <source>
    </source>
</evidence>
<evidence type="ECO:0000305" key="5"/>
<accession>P20852</accession>
<name>CP2A5_MOUSE</name>